<proteinExistence type="inferred from homology"/>
<comment type="function">
    <text evidence="1">Involved in the TCA cycle. Catalyzes the stereospecific interconversion of fumarate to L-malate.</text>
</comment>
<comment type="catalytic activity">
    <reaction evidence="1">
        <text>(S)-malate = fumarate + H2O</text>
        <dbReference type="Rhea" id="RHEA:12460"/>
        <dbReference type="ChEBI" id="CHEBI:15377"/>
        <dbReference type="ChEBI" id="CHEBI:15589"/>
        <dbReference type="ChEBI" id="CHEBI:29806"/>
        <dbReference type="EC" id="4.2.1.2"/>
    </reaction>
</comment>
<comment type="pathway">
    <text evidence="1">Carbohydrate metabolism; tricarboxylic acid cycle; (S)-malate from fumarate: step 1/1.</text>
</comment>
<comment type="subunit">
    <text evidence="1">Homotetramer.</text>
</comment>
<comment type="subcellular location">
    <subcellularLocation>
        <location evidence="1">Cytoplasm</location>
    </subcellularLocation>
</comment>
<comment type="miscellaneous">
    <text evidence="1">There are 2 substrate-binding sites: the catalytic A site, and the non-catalytic B site that may play a role in the transfer of substrate or product between the active site and the solvent. Alternatively, the B site may bind allosteric effectors.</text>
</comment>
<comment type="similarity">
    <text evidence="1">Belongs to the class-II fumarase/aspartase family. Fumarase subfamily.</text>
</comment>
<reference key="1">
    <citation type="journal article" date="2003" name="Proc. Natl. Acad. Sci. U.S.A.">
        <title>The complete genome sequence of Mycobacterium bovis.</title>
        <authorList>
            <person name="Garnier T."/>
            <person name="Eiglmeier K."/>
            <person name="Camus J.-C."/>
            <person name="Medina N."/>
            <person name="Mansoor H."/>
            <person name="Pryor M."/>
            <person name="Duthoy S."/>
            <person name="Grondin S."/>
            <person name="Lacroix C."/>
            <person name="Monsempe C."/>
            <person name="Simon S."/>
            <person name="Harris B."/>
            <person name="Atkin R."/>
            <person name="Doggett J."/>
            <person name="Mayes R."/>
            <person name="Keating L."/>
            <person name="Wheeler P.R."/>
            <person name="Parkhill J."/>
            <person name="Barrell B.G."/>
            <person name="Cole S.T."/>
            <person name="Gordon S.V."/>
            <person name="Hewinson R.G."/>
        </authorList>
    </citation>
    <scope>NUCLEOTIDE SEQUENCE [LARGE SCALE GENOMIC DNA]</scope>
    <source>
        <strain>ATCC BAA-935 / AF2122/97</strain>
    </source>
</reference>
<reference key="2">
    <citation type="journal article" date="2017" name="Genome Announc.">
        <title>Updated reference genome sequence and annotation of Mycobacterium bovis AF2122/97.</title>
        <authorList>
            <person name="Malone K.M."/>
            <person name="Farrell D."/>
            <person name="Stuber T.P."/>
            <person name="Schubert O.T."/>
            <person name="Aebersold R."/>
            <person name="Robbe-Austerman S."/>
            <person name="Gordon S.V."/>
        </authorList>
    </citation>
    <scope>NUCLEOTIDE SEQUENCE [LARGE SCALE GENOMIC DNA]</scope>
    <scope>GENOME REANNOTATION</scope>
    <source>
        <strain>ATCC BAA-935 / AF2122/97</strain>
    </source>
</reference>
<protein>
    <recommendedName>
        <fullName evidence="1">Fumarate hydratase class II</fullName>
        <shortName evidence="1">Fumarase C</shortName>
        <ecNumber evidence="1">4.2.1.2</ecNumber>
    </recommendedName>
    <alternativeName>
        <fullName evidence="1">Aerobic fumarase</fullName>
    </alternativeName>
    <alternativeName>
        <fullName evidence="1">Iron-independent fumarase</fullName>
    </alternativeName>
</protein>
<evidence type="ECO:0000255" key="1">
    <source>
        <dbReference type="HAMAP-Rule" id="MF_00743"/>
    </source>
</evidence>
<sequence length="474" mass="50141">MAVDADSANYRIEHDTMGEVRVPAKALWRAQTQRAVENFPISGRGLERTQIRALGLLKGACAQVNSDLGLLAPEKADAIIAAAAEIADGQHDDQFPIDVFQTGSGTSSNMNTNEVIASIAAKGGVTLHPNDDVNMSQSSNDTFPTATHIAATEAAVAHLIPALQQLHDALAAKALDWHTVVKSGRTHLMDAVPVTLGQEFSGYARQIEAGIERVRACLPRLGELAIGGTAVGTGLNAPDDFGVRVVAVLVAQTGLSELRTAANSFEAQAARDGLVEASGALRTIAVSLTKIANDIRWMGSGPLTGLAEIQLPDLQPGSSIMPGKVNPVLPEAVTQVAAQVIGNDAAIAWGGANGAFELNVYIPMMARNILESFKLLTNVSRLFAQRCIAGLTANVEHLRRLAESSPSIVTPLNSAIGYEEAAAVAKQALKERKTIRQTVIDRGLIGDRLSIEDLDRRLDVLAMAKAEQLDSDRL</sequence>
<gene>
    <name evidence="1" type="primary">fumC</name>
    <name type="synonym">fum</name>
    <name type="ordered locus">BQ2027_MB1128C</name>
</gene>
<organism>
    <name type="scientific">Mycobacterium bovis (strain ATCC BAA-935 / AF2122/97)</name>
    <dbReference type="NCBI Taxonomy" id="233413"/>
    <lineage>
        <taxon>Bacteria</taxon>
        <taxon>Bacillati</taxon>
        <taxon>Actinomycetota</taxon>
        <taxon>Actinomycetes</taxon>
        <taxon>Mycobacteriales</taxon>
        <taxon>Mycobacteriaceae</taxon>
        <taxon>Mycobacterium</taxon>
        <taxon>Mycobacterium tuberculosis complex</taxon>
    </lineage>
</organism>
<keyword id="KW-0963">Cytoplasm</keyword>
<keyword id="KW-0456">Lyase</keyword>
<keyword id="KW-1185">Reference proteome</keyword>
<keyword id="KW-0816">Tricarboxylic acid cycle</keyword>
<dbReference type="EC" id="4.2.1.2" evidence="1"/>
<dbReference type="EMBL" id="LT708304">
    <property type="protein sequence ID" value="SIT99728.1"/>
    <property type="molecule type" value="Genomic_DNA"/>
</dbReference>
<dbReference type="RefSeq" id="NP_854784.1">
    <property type="nucleotide sequence ID" value="NC_002945.3"/>
</dbReference>
<dbReference type="RefSeq" id="WP_003405805.1">
    <property type="nucleotide sequence ID" value="NC_002945.4"/>
</dbReference>
<dbReference type="SMR" id="Q7U0N6"/>
<dbReference type="KEGG" id="mbo:BQ2027_MB1128C"/>
<dbReference type="PATRIC" id="fig|233413.5.peg.1234"/>
<dbReference type="UniPathway" id="UPA00223">
    <property type="reaction ID" value="UER01007"/>
</dbReference>
<dbReference type="Proteomes" id="UP000001419">
    <property type="component" value="Chromosome"/>
</dbReference>
<dbReference type="GO" id="GO:0005737">
    <property type="term" value="C:cytoplasm"/>
    <property type="evidence" value="ECO:0007669"/>
    <property type="project" value="UniProtKB-SubCell"/>
</dbReference>
<dbReference type="GO" id="GO:0004333">
    <property type="term" value="F:fumarate hydratase activity"/>
    <property type="evidence" value="ECO:0007669"/>
    <property type="project" value="UniProtKB-UniRule"/>
</dbReference>
<dbReference type="GO" id="GO:0006106">
    <property type="term" value="P:fumarate metabolic process"/>
    <property type="evidence" value="ECO:0007669"/>
    <property type="project" value="InterPro"/>
</dbReference>
<dbReference type="GO" id="GO:0006099">
    <property type="term" value="P:tricarboxylic acid cycle"/>
    <property type="evidence" value="ECO:0007669"/>
    <property type="project" value="UniProtKB-UniRule"/>
</dbReference>
<dbReference type="CDD" id="cd01362">
    <property type="entry name" value="Fumarase_classII"/>
    <property type="match status" value="1"/>
</dbReference>
<dbReference type="FunFam" id="1.10.40.30:FF:000008">
    <property type="entry name" value="Fumarate hydratase class II"/>
    <property type="match status" value="1"/>
</dbReference>
<dbReference type="FunFam" id="1.10.275.10:FF:000001">
    <property type="entry name" value="Fumarate hydratase, mitochondrial"/>
    <property type="match status" value="1"/>
</dbReference>
<dbReference type="FunFam" id="1.20.200.10:FF:000001">
    <property type="entry name" value="Fumarate hydratase, mitochondrial"/>
    <property type="match status" value="1"/>
</dbReference>
<dbReference type="Gene3D" id="1.10.40.30">
    <property type="entry name" value="Fumarase/aspartase (C-terminal domain)"/>
    <property type="match status" value="1"/>
</dbReference>
<dbReference type="Gene3D" id="1.20.200.10">
    <property type="entry name" value="Fumarase/aspartase (Central domain)"/>
    <property type="match status" value="1"/>
</dbReference>
<dbReference type="Gene3D" id="1.10.275.10">
    <property type="entry name" value="Fumarase/aspartase (N-terminal domain)"/>
    <property type="match status" value="1"/>
</dbReference>
<dbReference type="HAMAP" id="MF_00743">
    <property type="entry name" value="FumaraseC"/>
    <property type="match status" value="1"/>
</dbReference>
<dbReference type="InterPro" id="IPR005677">
    <property type="entry name" value="Fum_hydII"/>
</dbReference>
<dbReference type="InterPro" id="IPR024083">
    <property type="entry name" value="Fumarase/histidase_N"/>
</dbReference>
<dbReference type="InterPro" id="IPR018951">
    <property type="entry name" value="Fumarase_C_C"/>
</dbReference>
<dbReference type="InterPro" id="IPR020557">
    <property type="entry name" value="Fumarate_lyase_CS"/>
</dbReference>
<dbReference type="InterPro" id="IPR000362">
    <property type="entry name" value="Fumarate_lyase_fam"/>
</dbReference>
<dbReference type="InterPro" id="IPR022761">
    <property type="entry name" value="Fumarate_lyase_N"/>
</dbReference>
<dbReference type="InterPro" id="IPR008948">
    <property type="entry name" value="L-Aspartase-like"/>
</dbReference>
<dbReference type="NCBIfam" id="NF008909">
    <property type="entry name" value="PRK12273.1"/>
    <property type="match status" value="1"/>
</dbReference>
<dbReference type="PANTHER" id="PTHR11444">
    <property type="entry name" value="ASPARTATEAMMONIA/ARGININOSUCCINATE/ADENYLOSUCCINATE LYASE"/>
    <property type="match status" value="1"/>
</dbReference>
<dbReference type="PANTHER" id="PTHR11444:SF22">
    <property type="entry name" value="FUMARATE HYDRATASE CLASS II"/>
    <property type="match status" value="1"/>
</dbReference>
<dbReference type="Pfam" id="PF10415">
    <property type="entry name" value="FumaraseC_C"/>
    <property type="match status" value="1"/>
</dbReference>
<dbReference type="Pfam" id="PF00206">
    <property type="entry name" value="Lyase_1"/>
    <property type="match status" value="1"/>
</dbReference>
<dbReference type="PRINTS" id="PR00149">
    <property type="entry name" value="FUMRATELYASE"/>
</dbReference>
<dbReference type="SUPFAM" id="SSF48557">
    <property type="entry name" value="L-aspartase-like"/>
    <property type="match status" value="1"/>
</dbReference>
<dbReference type="PROSITE" id="PS00163">
    <property type="entry name" value="FUMARATE_LYASES"/>
    <property type="match status" value="1"/>
</dbReference>
<feature type="chain" id="PRO_0000161288" description="Fumarate hydratase class II">
    <location>
        <begin position="1"/>
        <end position="474"/>
    </location>
</feature>
<feature type="active site" description="Proton donor/acceptor" evidence="1">
    <location>
        <position position="187"/>
    </location>
</feature>
<feature type="active site" evidence="1">
    <location>
        <position position="318"/>
    </location>
</feature>
<feature type="binding site" evidence="1">
    <location>
        <begin position="104"/>
        <end position="106"/>
    </location>
    <ligand>
        <name>substrate</name>
    </ligand>
</feature>
<feature type="binding site" description="in site B" evidence="1">
    <location>
        <begin position="128"/>
        <end position="131"/>
    </location>
    <ligand>
        <name>substrate</name>
    </ligand>
</feature>
<feature type="binding site" evidence="1">
    <location>
        <begin position="138"/>
        <end position="140"/>
    </location>
    <ligand>
        <name>substrate</name>
    </ligand>
</feature>
<feature type="binding site" evidence="1">
    <location>
        <position position="186"/>
    </location>
    <ligand>
        <name>substrate</name>
    </ligand>
</feature>
<feature type="binding site" evidence="1">
    <location>
        <position position="319"/>
    </location>
    <ligand>
        <name>substrate</name>
    </ligand>
</feature>
<feature type="binding site" evidence="1">
    <location>
        <begin position="324"/>
        <end position="326"/>
    </location>
    <ligand>
        <name>substrate</name>
    </ligand>
</feature>
<feature type="site" description="Important for catalytic activity" evidence="1">
    <location>
        <position position="331"/>
    </location>
</feature>
<accession>Q7U0N6</accession>
<accession>A0A1R3XXC3</accession>
<accession>X2BH10</accession>
<name>FUMC_MYCBO</name>